<gene>
    <name evidence="1" type="primary">cobS</name>
    <name type="ordered locus">PYRAB00440</name>
    <name type="ORF">PAB2320</name>
</gene>
<protein>
    <recommendedName>
        <fullName evidence="1">Adenosylcobinamide-GDP ribazoletransferase</fullName>
        <ecNumber evidence="1">2.7.8.26</ecNumber>
    </recommendedName>
    <alternativeName>
        <fullName evidence="1">Cobalamin synthase</fullName>
    </alternativeName>
    <alternativeName>
        <fullName evidence="1">Cobalamin-5'-phosphate synthase</fullName>
    </alternativeName>
</protein>
<feature type="chain" id="PRO_0000146915" description="Adenosylcobinamide-GDP ribazoletransferase">
    <location>
        <begin position="1"/>
        <end position="232"/>
    </location>
</feature>
<feature type="transmembrane region" description="Helical" evidence="1">
    <location>
        <begin position="24"/>
        <end position="44"/>
    </location>
</feature>
<feature type="transmembrane region" description="Helical" evidence="1">
    <location>
        <begin position="46"/>
        <end position="66"/>
    </location>
</feature>
<feature type="transmembrane region" description="Helical" evidence="1">
    <location>
        <begin position="96"/>
        <end position="116"/>
    </location>
</feature>
<feature type="transmembrane region" description="Helical" evidence="1">
    <location>
        <begin position="117"/>
        <end position="137"/>
    </location>
</feature>
<feature type="transmembrane region" description="Helical" evidence="1">
    <location>
        <begin position="153"/>
        <end position="173"/>
    </location>
</feature>
<feature type="transmembrane region" description="Helical" evidence="1">
    <location>
        <begin position="174"/>
        <end position="194"/>
    </location>
</feature>
<feature type="transmembrane region" description="Helical" evidence="1">
    <location>
        <begin position="210"/>
        <end position="230"/>
    </location>
</feature>
<reference key="1">
    <citation type="journal article" date="2003" name="Mol. Microbiol.">
        <title>An integrated analysis of the genome of the hyperthermophilic archaeon Pyrococcus abyssi.</title>
        <authorList>
            <person name="Cohen G.N."/>
            <person name="Barbe V."/>
            <person name="Flament D."/>
            <person name="Galperin M."/>
            <person name="Heilig R."/>
            <person name="Lecompte O."/>
            <person name="Poch O."/>
            <person name="Prieur D."/>
            <person name="Querellou J."/>
            <person name="Ripp R."/>
            <person name="Thierry J.-C."/>
            <person name="Van der Oost J."/>
            <person name="Weissenbach J."/>
            <person name="Zivanovic Y."/>
            <person name="Forterre P."/>
        </authorList>
    </citation>
    <scope>NUCLEOTIDE SEQUENCE [LARGE SCALE GENOMIC DNA]</scope>
    <source>
        <strain>GE5 / Orsay</strain>
    </source>
</reference>
<reference key="2">
    <citation type="journal article" date="2012" name="Curr. Microbiol.">
        <title>Re-annotation of two hyperthermophilic archaea Pyrococcus abyssi GE5 and Pyrococcus furiosus DSM 3638.</title>
        <authorList>
            <person name="Gao J."/>
            <person name="Wang J."/>
        </authorList>
    </citation>
    <scope>GENOME REANNOTATION</scope>
    <source>
        <strain>GE5 / Orsay</strain>
    </source>
</reference>
<sequence>MRNILPFLTRIPVKGDFEKARNELWAFPLVSLVSSIIPIAILYLRIPLANVLALLSLYFVIGLLHLDGLADWADGIMVKGDRERKIKAMKDLNTGIAGVFAVVVVLFLQVYSLSMLPFYAIYIAELNSKFSMLLGLATKKPLGQGLGAYFMEGMNGRQLAIGVVLYVLLYLPVVIYDPSALFGVMGLVFAWYVIRLSLENFGGINGDCLGAMAEITRAGTLVILSFSLCFTT</sequence>
<organism>
    <name type="scientific">Pyrococcus abyssi (strain GE5 / Orsay)</name>
    <dbReference type="NCBI Taxonomy" id="272844"/>
    <lineage>
        <taxon>Archaea</taxon>
        <taxon>Methanobacteriati</taxon>
        <taxon>Methanobacteriota</taxon>
        <taxon>Thermococci</taxon>
        <taxon>Thermococcales</taxon>
        <taxon>Thermococcaceae</taxon>
        <taxon>Pyrococcus</taxon>
    </lineage>
</organism>
<dbReference type="EC" id="2.7.8.26" evidence="1"/>
<dbReference type="EMBL" id="AJ248283">
    <property type="protein sequence ID" value="CAB48967.1"/>
    <property type="molecule type" value="Genomic_DNA"/>
</dbReference>
<dbReference type="EMBL" id="HE613800">
    <property type="protein sequence ID" value="CCE69416.1"/>
    <property type="molecule type" value="Genomic_DNA"/>
</dbReference>
<dbReference type="PIR" id="H75189">
    <property type="entry name" value="H75189"/>
</dbReference>
<dbReference type="RefSeq" id="WP_010867168.1">
    <property type="nucleotide sequence ID" value="NC_000868.1"/>
</dbReference>
<dbReference type="STRING" id="272844.PAB2320"/>
<dbReference type="KEGG" id="pab:PAB2320"/>
<dbReference type="PATRIC" id="fig|272844.11.peg.51"/>
<dbReference type="eggNOG" id="arCOG04338">
    <property type="taxonomic scope" value="Archaea"/>
</dbReference>
<dbReference type="HOGENOM" id="CLU_057426_2_0_2"/>
<dbReference type="OrthoDB" id="11748at2157"/>
<dbReference type="PhylomeDB" id="Q9V2N1"/>
<dbReference type="UniPathway" id="UPA00148">
    <property type="reaction ID" value="UER00238"/>
</dbReference>
<dbReference type="Proteomes" id="UP000000810">
    <property type="component" value="Chromosome"/>
</dbReference>
<dbReference type="Proteomes" id="UP000009139">
    <property type="component" value="Chromosome"/>
</dbReference>
<dbReference type="GO" id="GO:0005886">
    <property type="term" value="C:plasma membrane"/>
    <property type="evidence" value="ECO:0007669"/>
    <property type="project" value="UniProtKB-SubCell"/>
</dbReference>
<dbReference type="GO" id="GO:0051073">
    <property type="term" value="F:adenosylcobinamide-GDP ribazoletransferase activity"/>
    <property type="evidence" value="ECO:0007669"/>
    <property type="project" value="UniProtKB-UniRule"/>
</dbReference>
<dbReference type="GO" id="GO:0008818">
    <property type="term" value="F:cobalamin 5'-phosphate synthase activity"/>
    <property type="evidence" value="ECO:0007669"/>
    <property type="project" value="UniProtKB-UniRule"/>
</dbReference>
<dbReference type="GO" id="GO:0009236">
    <property type="term" value="P:cobalamin biosynthetic process"/>
    <property type="evidence" value="ECO:0007669"/>
    <property type="project" value="UniProtKB-UniRule"/>
</dbReference>
<dbReference type="HAMAP" id="MF_00719">
    <property type="entry name" value="CobS"/>
    <property type="match status" value="1"/>
</dbReference>
<dbReference type="InterPro" id="IPR003805">
    <property type="entry name" value="CobS"/>
</dbReference>
<dbReference type="NCBIfam" id="TIGR00317">
    <property type="entry name" value="cobS"/>
    <property type="match status" value="1"/>
</dbReference>
<dbReference type="PANTHER" id="PTHR34148">
    <property type="entry name" value="ADENOSYLCOBINAMIDE-GDP RIBAZOLETRANSFERASE"/>
    <property type="match status" value="1"/>
</dbReference>
<dbReference type="PANTHER" id="PTHR34148:SF1">
    <property type="entry name" value="ADENOSYLCOBINAMIDE-GDP RIBAZOLETRANSFERASE"/>
    <property type="match status" value="1"/>
</dbReference>
<dbReference type="Pfam" id="PF02654">
    <property type="entry name" value="CobS"/>
    <property type="match status" value="1"/>
</dbReference>
<keyword id="KW-1003">Cell membrane</keyword>
<keyword id="KW-0169">Cobalamin biosynthesis</keyword>
<keyword id="KW-0460">Magnesium</keyword>
<keyword id="KW-0472">Membrane</keyword>
<keyword id="KW-0808">Transferase</keyword>
<keyword id="KW-0812">Transmembrane</keyword>
<keyword id="KW-1133">Transmembrane helix</keyword>
<proteinExistence type="inferred from homology"/>
<accession>Q9V2N1</accession>
<accession>G8ZFM5</accession>
<comment type="function">
    <text evidence="1">Joins adenosylcobinamide-GDP and alpha-ribazole to generate adenosylcobalamin (Ado-cobalamin). Also synthesizes adenosylcobalamin 5'-phosphate from adenosylcobinamide-GDP and alpha-ribazole 5'-phosphate.</text>
</comment>
<comment type="catalytic activity">
    <reaction evidence="1">
        <text>alpha-ribazole + adenosylcob(III)inamide-GDP = adenosylcob(III)alamin + GMP + H(+)</text>
        <dbReference type="Rhea" id="RHEA:16049"/>
        <dbReference type="ChEBI" id="CHEBI:10329"/>
        <dbReference type="ChEBI" id="CHEBI:15378"/>
        <dbReference type="ChEBI" id="CHEBI:18408"/>
        <dbReference type="ChEBI" id="CHEBI:58115"/>
        <dbReference type="ChEBI" id="CHEBI:60487"/>
        <dbReference type="EC" id="2.7.8.26"/>
    </reaction>
</comment>
<comment type="catalytic activity">
    <reaction evidence="1">
        <text>alpha-ribazole 5'-phosphate + adenosylcob(III)inamide-GDP = adenosylcob(III)alamin 5'-phosphate + GMP + H(+)</text>
        <dbReference type="Rhea" id="RHEA:23560"/>
        <dbReference type="ChEBI" id="CHEBI:15378"/>
        <dbReference type="ChEBI" id="CHEBI:57918"/>
        <dbReference type="ChEBI" id="CHEBI:58115"/>
        <dbReference type="ChEBI" id="CHEBI:60487"/>
        <dbReference type="ChEBI" id="CHEBI:60493"/>
        <dbReference type="EC" id="2.7.8.26"/>
    </reaction>
</comment>
<comment type="cofactor">
    <cofactor evidence="1">
        <name>Mg(2+)</name>
        <dbReference type="ChEBI" id="CHEBI:18420"/>
    </cofactor>
</comment>
<comment type="pathway">
    <text evidence="1">Cofactor biosynthesis; adenosylcobalamin biosynthesis; adenosylcobalamin from cob(II)yrinate a,c-diamide: step 7/7.</text>
</comment>
<comment type="subcellular location">
    <subcellularLocation>
        <location evidence="1">Cell membrane</location>
        <topology evidence="1">Multi-pass membrane protein</topology>
    </subcellularLocation>
</comment>
<comment type="similarity">
    <text evidence="1">Belongs to the CobS family.</text>
</comment>
<name>COBS_PYRAB</name>
<evidence type="ECO:0000255" key="1">
    <source>
        <dbReference type="HAMAP-Rule" id="MF_00719"/>
    </source>
</evidence>